<reference key="1">
    <citation type="submission" date="1996-12" db="EMBL/GenBank/DDBJ databases">
        <title>Partial crystal protein gene sequence of Bacillus thuringiensis NT0423 isolated from soil in Korea.</title>
        <authorList>
            <person name="Kang S.K."/>
            <person name="Kim H.S."/>
            <person name="Yu Y.M."/>
        </authorList>
    </citation>
    <scope>NUCLEOTIDE SEQUENCE [GENOMIC DNA]</scope>
    <source>
        <strain>NT0423</strain>
    </source>
</reference>
<evidence type="ECO:0000305" key="1"/>
<comment type="function">
    <text>Promotes colloidosmotic lysis by binding to the midgut epithelial cells of both dipteran and lepidopteran larvae.</text>
</comment>
<comment type="developmental stage">
    <text>The crystal protein is produced during sporulation and is accumulated both as an inclusion and as part of the spore coat.</text>
</comment>
<comment type="miscellaneous">
    <text>Toxic segment of the protein is located in the N-terminus.</text>
</comment>
<comment type="similarity">
    <text evidence="1">Belongs to the delta endotoxin family.</text>
</comment>
<keyword id="KW-0614">Plasmid</keyword>
<keyword id="KW-0749">Sporulation</keyword>
<keyword id="KW-0800">Toxin</keyword>
<keyword id="KW-0843">Virulence</keyword>
<organism>
    <name type="scientific">Bacillus thuringiensis</name>
    <dbReference type="NCBI Taxonomy" id="1428"/>
    <lineage>
        <taxon>Bacteria</taxon>
        <taxon>Bacillati</taxon>
        <taxon>Bacillota</taxon>
        <taxon>Bacilli</taxon>
        <taxon>Bacillales</taxon>
        <taxon>Bacillaceae</taxon>
        <taxon>Bacillus</taxon>
        <taxon>Bacillus cereus group</taxon>
    </lineage>
</organism>
<feature type="chain" id="PRO_0000174027" description="Pesticidal crystal protein Cry1Af">
    <location>
        <begin position="1"/>
        <end position="911" status="greater than"/>
    </location>
</feature>
<feature type="non-terminal residue">
    <location>
        <position position="911"/>
    </location>
</feature>
<geneLocation type="plasmid">
    <name>pKSKNT</name>
</geneLocation>
<dbReference type="EMBL" id="U82003">
    <property type="protein sequence ID" value="AAB82749.1"/>
    <property type="molecule type" value="Genomic_DNA"/>
</dbReference>
<dbReference type="SMR" id="P96315"/>
<dbReference type="GO" id="GO:0005102">
    <property type="term" value="F:signaling receptor binding"/>
    <property type="evidence" value="ECO:0007669"/>
    <property type="project" value="InterPro"/>
</dbReference>
<dbReference type="GO" id="GO:0090729">
    <property type="term" value="F:toxin activity"/>
    <property type="evidence" value="ECO:0007669"/>
    <property type="project" value="UniProtKB-KW"/>
</dbReference>
<dbReference type="GO" id="GO:0030435">
    <property type="term" value="P:sporulation resulting in formation of a cellular spore"/>
    <property type="evidence" value="ECO:0007669"/>
    <property type="project" value="UniProtKB-KW"/>
</dbReference>
<dbReference type="GO" id="GO:0001907">
    <property type="term" value="P:symbiont-mediated killing of host cell"/>
    <property type="evidence" value="ECO:0007669"/>
    <property type="project" value="InterPro"/>
</dbReference>
<dbReference type="CDD" id="cd04085">
    <property type="entry name" value="delta_endotoxin_C"/>
    <property type="match status" value="1"/>
</dbReference>
<dbReference type="Gene3D" id="2.60.120.260">
    <property type="entry name" value="Galactose-binding domain-like"/>
    <property type="match status" value="1"/>
</dbReference>
<dbReference type="Gene3D" id="2.100.10.10">
    <property type="entry name" value="Pesticidal crystal protein, central domain"/>
    <property type="match status" value="1"/>
</dbReference>
<dbReference type="Gene3D" id="1.20.190.10">
    <property type="entry name" value="Pesticidal crystal protein, N-terminal domain"/>
    <property type="match status" value="1"/>
</dbReference>
<dbReference type="InterPro" id="IPR041587">
    <property type="entry name" value="Cry_V"/>
</dbReference>
<dbReference type="InterPro" id="IPR008979">
    <property type="entry name" value="Galactose-bd-like_sf"/>
</dbReference>
<dbReference type="InterPro" id="IPR054544">
    <property type="entry name" value="Pest_crys_Cry1Aa_dom-IV"/>
</dbReference>
<dbReference type="InterPro" id="IPR005638">
    <property type="entry name" value="Pest_crys_dom-III"/>
</dbReference>
<dbReference type="InterPro" id="IPR005639">
    <property type="entry name" value="Pest_crys_dom_I"/>
</dbReference>
<dbReference type="InterPro" id="IPR036716">
    <property type="entry name" value="Pest_crys_N_sf"/>
</dbReference>
<dbReference type="InterPro" id="IPR036399">
    <property type="entry name" value="Pest_cryst_cen_dom_sf"/>
</dbReference>
<dbReference type="InterPro" id="IPR001178">
    <property type="entry name" value="Pest_cryst_dom_II"/>
</dbReference>
<dbReference type="Pfam" id="PF17997">
    <property type="entry name" value="Cry1Ac_D5"/>
    <property type="match status" value="1"/>
</dbReference>
<dbReference type="Pfam" id="PF03944">
    <property type="entry name" value="Endotoxin_C"/>
    <property type="match status" value="1"/>
</dbReference>
<dbReference type="Pfam" id="PF18449">
    <property type="entry name" value="Endotoxin_C2"/>
    <property type="match status" value="1"/>
</dbReference>
<dbReference type="Pfam" id="PF00555">
    <property type="entry name" value="Endotoxin_M"/>
    <property type="match status" value="1"/>
</dbReference>
<dbReference type="Pfam" id="PF03945">
    <property type="entry name" value="Endotoxin_N"/>
    <property type="match status" value="1"/>
</dbReference>
<dbReference type="SUPFAM" id="SSF51096">
    <property type="entry name" value="delta-Endotoxin (insectocide), middle domain"/>
    <property type="match status" value="1"/>
</dbReference>
<dbReference type="SUPFAM" id="SSF56849">
    <property type="entry name" value="delta-Endotoxin (insectocide), N-terminal domain"/>
    <property type="match status" value="1"/>
</dbReference>
<dbReference type="SUPFAM" id="SSF49785">
    <property type="entry name" value="Galactose-binding domain-like"/>
    <property type="match status" value="1"/>
</dbReference>
<sequence length="911" mass="103181">MDNNPNINECIPYNCLSNPEVEVLGGERIETGYTPIDISLSLTQFLLSEFVPGAGFVLGLVDIIWEIFSVLSSDAFLVQIEQLINQRIEEFARNQAISRLEGLSNLYQIYAESFREWEADPTNPALREEMRIQFNDMNSALTTAIPLFAVQNYQVPLLSVYVTCNYIISSESVMCGQRSGFDAATINSRYNDLTRLIGNYTDHAVRWYNTGLERVWGPDSRDWIRYNQFRRELTLTVLDIVSLFPNYDSRTYPIRTVSQLTREIYTNPVLENFDGSFRGSAQGIEGSIRSPHLMDILNSITIYTDAHRGEYYWSGHQIMASPVGFSGPEFTFPLYGTMGNSAPQQRIVAQLGQGVYRTLSSTLYRRPFNIGINNQQLSVLDGTEFAYGTSSNLPSAVYRKSGTVDSLDEIPPQNNNVPPRQGFSHRLSHVSMFRSGFSNSSVSIIRAPMFSWIHRSAEFNNIIPSSQITQIPLTKSTNLGSGTSVVKGPGFTGGDILRRTSPGQISTLRVNITAPLSQRYRVRILYASTTNLQFHTSIDGRPINQGNFSATMSSGRNLQSGSLRTVGFTTPFNFSNGSSVFTLSAHVFNSGNEVYIDRIEFVPAEVTFEAEYDLERAQKAVNELFTSSNQIGLKTDVTDYHIDQVSNLVECLSDEFCLDEKKELSEKVKHAKRLSDERNLLQDPNFRGINRQLDRGWRRSTDITTQGGDDFFQENYVTLLGTLMGFPSIYIKKWWFEIKSLYPLPIRGYIEDSQDLEIYLIRYNAKHETVNVPGTVPYGRFQPQVPIGKCAHHSHHFSLDIDVGCTDLNEDLGVWVIFKIKTQDGHARLGNLEFLEEKPLVGEALARVKRAEKKWRDKREKLEWETNIVYKEAKESVDALFVNSQYDRLQADTNIAMIHAADKRVHSIREA</sequence>
<proteinExistence type="evidence at transcript level"/>
<name>CR1AF_BACTU</name>
<accession>P96315</accession>
<gene>
    <name type="primary">cry1Af</name>
    <name type="synonym">cryIA(f)</name>
    <name type="synonym">icp</name>
</gene>
<protein>
    <recommendedName>
        <fullName>Pesticidal crystal protein Cry1Af</fullName>
    </recommendedName>
    <alternativeName>
        <fullName>Crystaline entomocidal protoxin</fullName>
    </alternativeName>
    <alternativeName>
        <fullName>Insecticidal delta-endotoxin CryIA(f)</fullName>
    </alternativeName>
</protein>